<accession>B6YST9</accession>
<proteinExistence type="inferred from homology"/>
<protein>
    <recommendedName>
        <fullName evidence="1">Leucine--tRNA ligase</fullName>
        <ecNumber evidence="1">6.1.1.4</ecNumber>
    </recommendedName>
    <alternativeName>
        <fullName evidence="1">Leucyl-tRNA synthetase</fullName>
        <shortName evidence="1">LeuRS</shortName>
    </alternativeName>
</protein>
<keyword id="KW-0030">Aminoacyl-tRNA synthetase</keyword>
<keyword id="KW-0067">ATP-binding</keyword>
<keyword id="KW-0963">Cytoplasm</keyword>
<keyword id="KW-0436">Ligase</keyword>
<keyword id="KW-0547">Nucleotide-binding</keyword>
<keyword id="KW-0648">Protein biosynthesis</keyword>
<feature type="chain" id="PRO_1000199235" description="Leucine--tRNA ligase">
    <location>
        <begin position="1"/>
        <end position="967"/>
    </location>
</feature>
<feature type="short sequence motif" description="'HIGH' region">
    <location>
        <begin position="43"/>
        <end position="53"/>
    </location>
</feature>
<feature type="short sequence motif" description="'KMSKS' region">
    <location>
        <begin position="650"/>
        <end position="654"/>
    </location>
</feature>
<feature type="binding site" evidence="1">
    <location>
        <position position="653"/>
    </location>
    <ligand>
        <name>ATP</name>
        <dbReference type="ChEBI" id="CHEBI:30616"/>
    </ligand>
</feature>
<organism>
    <name type="scientific">Thermococcus onnurineus (strain NA1)</name>
    <dbReference type="NCBI Taxonomy" id="523850"/>
    <lineage>
        <taxon>Archaea</taxon>
        <taxon>Methanobacteriati</taxon>
        <taxon>Methanobacteriota</taxon>
        <taxon>Thermococci</taxon>
        <taxon>Thermococcales</taxon>
        <taxon>Thermococcaceae</taxon>
        <taxon>Thermococcus</taxon>
    </lineage>
</organism>
<dbReference type="EC" id="6.1.1.4" evidence="1"/>
<dbReference type="EMBL" id="CP000855">
    <property type="protein sequence ID" value="ACJ15626.1"/>
    <property type="molecule type" value="Genomic_DNA"/>
</dbReference>
<dbReference type="RefSeq" id="WP_012571099.1">
    <property type="nucleotide sequence ID" value="NC_011529.1"/>
</dbReference>
<dbReference type="SMR" id="B6YST9"/>
<dbReference type="STRING" id="523850.TON_0141"/>
<dbReference type="GeneID" id="7017795"/>
<dbReference type="KEGG" id="ton:TON_0141"/>
<dbReference type="PATRIC" id="fig|523850.10.peg.141"/>
<dbReference type="eggNOG" id="arCOG00809">
    <property type="taxonomic scope" value="Archaea"/>
</dbReference>
<dbReference type="HOGENOM" id="CLU_004174_0_0_2"/>
<dbReference type="OrthoDB" id="23906at2157"/>
<dbReference type="Proteomes" id="UP000002727">
    <property type="component" value="Chromosome"/>
</dbReference>
<dbReference type="GO" id="GO:0005737">
    <property type="term" value="C:cytoplasm"/>
    <property type="evidence" value="ECO:0007669"/>
    <property type="project" value="UniProtKB-SubCell"/>
</dbReference>
<dbReference type="GO" id="GO:0002161">
    <property type="term" value="F:aminoacyl-tRNA deacylase activity"/>
    <property type="evidence" value="ECO:0007669"/>
    <property type="project" value="InterPro"/>
</dbReference>
<dbReference type="GO" id="GO:0005524">
    <property type="term" value="F:ATP binding"/>
    <property type="evidence" value="ECO:0007669"/>
    <property type="project" value="UniProtKB-UniRule"/>
</dbReference>
<dbReference type="GO" id="GO:0004823">
    <property type="term" value="F:leucine-tRNA ligase activity"/>
    <property type="evidence" value="ECO:0007669"/>
    <property type="project" value="UniProtKB-UniRule"/>
</dbReference>
<dbReference type="GO" id="GO:0006429">
    <property type="term" value="P:leucyl-tRNA aminoacylation"/>
    <property type="evidence" value="ECO:0007669"/>
    <property type="project" value="UniProtKB-UniRule"/>
</dbReference>
<dbReference type="CDD" id="cd07959">
    <property type="entry name" value="Anticodon_Ia_Leu_AEc"/>
    <property type="match status" value="1"/>
</dbReference>
<dbReference type="CDD" id="cd00812">
    <property type="entry name" value="LeuRS_core"/>
    <property type="match status" value="1"/>
</dbReference>
<dbReference type="FunFam" id="1.10.730.10:FF:000051">
    <property type="entry name" value="Leucine--tRNA ligase"/>
    <property type="match status" value="1"/>
</dbReference>
<dbReference type="FunFam" id="3.90.740.10:FF:000024">
    <property type="entry name" value="Leucine--tRNA ligase"/>
    <property type="match status" value="1"/>
</dbReference>
<dbReference type="Gene3D" id="3.30.2320.20">
    <property type="entry name" value="Class I aminoacyl-tRNA synthetases (RS)"/>
    <property type="match status" value="1"/>
</dbReference>
<dbReference type="Gene3D" id="3.40.50.620">
    <property type="entry name" value="HUPs"/>
    <property type="match status" value="1"/>
</dbReference>
<dbReference type="Gene3D" id="1.10.730.10">
    <property type="entry name" value="Isoleucyl-tRNA Synthetase, Domain 1"/>
    <property type="match status" value="1"/>
</dbReference>
<dbReference type="Gene3D" id="1.10.10.720">
    <property type="entry name" value="leucyl-tRNA synthetase"/>
    <property type="match status" value="1"/>
</dbReference>
<dbReference type="Gene3D" id="3.90.740.10">
    <property type="entry name" value="Valyl/Leucyl/Isoleucyl-tRNA synthetase, editing domain"/>
    <property type="match status" value="1"/>
</dbReference>
<dbReference type="HAMAP" id="MF_00049_A">
    <property type="entry name" value="Leu_tRNA_synth_A"/>
    <property type="match status" value="1"/>
</dbReference>
<dbReference type="InterPro" id="IPR001412">
    <property type="entry name" value="aa-tRNA-synth_I_CS"/>
</dbReference>
<dbReference type="InterPro" id="IPR002300">
    <property type="entry name" value="aa-tRNA-synth_Ia"/>
</dbReference>
<dbReference type="InterPro" id="IPR020791">
    <property type="entry name" value="Leu-tRNA-lgase_arc"/>
</dbReference>
<dbReference type="InterPro" id="IPR004493">
    <property type="entry name" value="Leu-tRNA-synth_Ia_arc/euk"/>
</dbReference>
<dbReference type="InterPro" id="IPR013155">
    <property type="entry name" value="M/V/L/I-tRNA-synth_anticd-bd"/>
</dbReference>
<dbReference type="InterPro" id="IPR014729">
    <property type="entry name" value="Rossmann-like_a/b/a_fold"/>
</dbReference>
<dbReference type="InterPro" id="IPR009080">
    <property type="entry name" value="tRNAsynth_Ia_anticodon-bd"/>
</dbReference>
<dbReference type="InterPro" id="IPR009008">
    <property type="entry name" value="Val/Leu/Ile-tRNA-synth_edit"/>
</dbReference>
<dbReference type="NCBIfam" id="TIGR00395">
    <property type="entry name" value="leuS_arch"/>
    <property type="match status" value="1"/>
</dbReference>
<dbReference type="NCBIfam" id="NF008957">
    <property type="entry name" value="PRK12300.1"/>
    <property type="match status" value="1"/>
</dbReference>
<dbReference type="PANTHER" id="PTHR45794:SF1">
    <property type="entry name" value="LEUCINE--TRNA LIGASE, CYTOPLASMIC"/>
    <property type="match status" value="1"/>
</dbReference>
<dbReference type="PANTHER" id="PTHR45794">
    <property type="entry name" value="LEUCYL-TRNA SYNTHETASE"/>
    <property type="match status" value="1"/>
</dbReference>
<dbReference type="Pfam" id="PF08264">
    <property type="entry name" value="Anticodon_1"/>
    <property type="match status" value="1"/>
</dbReference>
<dbReference type="Pfam" id="PF00133">
    <property type="entry name" value="tRNA-synt_1"/>
    <property type="match status" value="1"/>
</dbReference>
<dbReference type="SUPFAM" id="SSF47323">
    <property type="entry name" value="Anticodon-binding domain of a subclass of class I aminoacyl-tRNA synthetases"/>
    <property type="match status" value="1"/>
</dbReference>
<dbReference type="SUPFAM" id="SSF52374">
    <property type="entry name" value="Nucleotidylyl transferase"/>
    <property type="match status" value="1"/>
</dbReference>
<dbReference type="SUPFAM" id="SSF50677">
    <property type="entry name" value="ValRS/IleRS/LeuRS editing domain"/>
    <property type="match status" value="1"/>
</dbReference>
<dbReference type="PROSITE" id="PS00178">
    <property type="entry name" value="AA_TRNA_LIGASE_I"/>
    <property type="match status" value="1"/>
</dbReference>
<name>SYL_THEON</name>
<sequence length="967" mass="113529">MAELNFKAIEEKWQKRWMEDRVFEPDRNAKPKEKKFYITVAFPYLSGHLHVGHARTYTIPDVIARFKRMQGYNVLFPMAWHITGAPIVGIAERIKNRDPKTIHIYRDVYKVPEEILWKFEDPKEIVKYFMKAARETFIRAGFSVDWSREFHTTSLFPPFSKFIEWQFWTLKDMGLVVKGAHRVRWDPVVGTPLGDHDIMEGEDVQILEYVIIKFILEENGEEIYMPAATLRPETVYGVTNMWLNPEAIYVKAKVRRGDREETWIISKEAAYKLSFQDREIEVIEEFKGERLIGKYVKNPVTGDEVIILPAEFVDPDNATGVVMSVPAHAPFDHVALEDLKKETEILLKYDIDPRVVEEISYISLIKLEGYGEFPAVEEVEKLGVKSQKDEEKLEEATKNIYKAEYHKGVFKIEPYAGKPVQEVKDLIAKELQEKGIAEIMYEFAEKPVISRFGNQAVIKIIHDQWFIDYGNPEWKEKAREALANMTIYPESRRTQFEAVIDWLDKKACARKVGLGTPLPWDPEWVIESLSDSTIYMAYYTISRHINKLREEGRLDPEKLDREFFDYLFREEFSEEREKELAEKTGIPAEIIHEMKEEFEYWYPLDWRCSAKDLIPNHLTFFIFNHVAIFRKGHWPRGIAVNGFGTLEGQKMSKSKGNVLNFIDAIEENGADVVRLYIMGLAEHDSDFDWRRKEVGKLRKQVERFYELVSEFASYEAKEGVELKDIDRWMLHRLNKAIEGATKGLEEFRTRTAVQWAFYSVLNDLRWYLRRTEGRDDEAKRYVLRTLADVWVRLMAPFTPHISEELWEKLGGEGFVSLAKWPEPNPAWWNETIELEEEYVKNLIEDIKEIIRVAKIEDAKRAYIYTAPEWKWRVAEAVAEKRDFKAAMSELMKDPEMRKHGKEISKMIQRLIKDRAFEIKRIDEEKALREAKDFIEKELGLEIIINPEEDKGGKKKAAMPMKPAVFVE</sequence>
<gene>
    <name evidence="1" type="primary">leuS</name>
    <name type="ordered locus">TON_0141</name>
</gene>
<reference key="1">
    <citation type="journal article" date="2008" name="J. Bacteriol.">
        <title>The complete genome sequence of Thermococcus onnurineus NA1 reveals a mixed heterotrophic and carboxydotrophic metabolism.</title>
        <authorList>
            <person name="Lee H.S."/>
            <person name="Kang S.G."/>
            <person name="Bae S.S."/>
            <person name="Lim J.K."/>
            <person name="Cho Y."/>
            <person name="Kim Y.J."/>
            <person name="Jeon J.H."/>
            <person name="Cha S.-S."/>
            <person name="Kwon K.K."/>
            <person name="Kim H.-T."/>
            <person name="Park C.-J."/>
            <person name="Lee H.-W."/>
            <person name="Kim S.I."/>
            <person name="Chun J."/>
            <person name="Colwell R.R."/>
            <person name="Kim S.-J."/>
            <person name="Lee J.-H."/>
        </authorList>
    </citation>
    <scope>NUCLEOTIDE SEQUENCE [LARGE SCALE GENOMIC DNA]</scope>
    <source>
        <strain>NA1</strain>
    </source>
</reference>
<comment type="catalytic activity">
    <reaction evidence="1">
        <text>tRNA(Leu) + L-leucine + ATP = L-leucyl-tRNA(Leu) + AMP + diphosphate</text>
        <dbReference type="Rhea" id="RHEA:11688"/>
        <dbReference type="Rhea" id="RHEA-COMP:9613"/>
        <dbReference type="Rhea" id="RHEA-COMP:9622"/>
        <dbReference type="ChEBI" id="CHEBI:30616"/>
        <dbReference type="ChEBI" id="CHEBI:33019"/>
        <dbReference type="ChEBI" id="CHEBI:57427"/>
        <dbReference type="ChEBI" id="CHEBI:78442"/>
        <dbReference type="ChEBI" id="CHEBI:78494"/>
        <dbReference type="ChEBI" id="CHEBI:456215"/>
        <dbReference type="EC" id="6.1.1.4"/>
    </reaction>
</comment>
<comment type="subcellular location">
    <subcellularLocation>
        <location evidence="1">Cytoplasm</location>
    </subcellularLocation>
</comment>
<comment type="similarity">
    <text evidence="1">Belongs to the class-I aminoacyl-tRNA synthetase family.</text>
</comment>
<evidence type="ECO:0000255" key="1">
    <source>
        <dbReference type="HAMAP-Rule" id="MF_00049"/>
    </source>
</evidence>